<sequence length="224" mass="23828">MSDTPSKGPATGSLTERQRTILEVIRASVNERGYPPSIREIGDAVGLTSTSSVAHQLRTLEQKGFLRRDPNRPRAVDVRGIDDAGTPSATTDVIGSGDLPEPTFVPVLGRIAAGGPILAEEAVEDVFPLPRELVGEGSLFLLKVVGESMVDAAICDGDWVVVRQQNVADNGDIVAAMIDGEATVKTFKRTSGQVWLMPHNPLFEPIPGNDAAILGKVVTVIRKV</sequence>
<comment type="function">
    <text evidence="1">Represses a number of genes involved in the response to DNA damage (SOS response), including recA and lexA. In the presence of single-stranded DNA, RecA interacts with LexA causing an autocatalytic cleavage which disrupts the DNA-binding part of LexA, leading to derepression of the SOS regulon and eventually DNA repair.</text>
</comment>
<comment type="catalytic activity">
    <reaction evidence="1">
        <text>Hydrolysis of Ala-|-Gly bond in repressor LexA.</text>
        <dbReference type="EC" id="3.4.21.88"/>
    </reaction>
</comment>
<comment type="subunit">
    <text evidence="1">Homodimer.</text>
</comment>
<comment type="similarity">
    <text evidence="1">Belongs to the peptidase S24 family.</text>
</comment>
<organism>
    <name type="scientific">Mycobacteroides abscessus (strain ATCC 19977 / DSM 44196 / CCUG 20993 / CIP 104536 / JCM 13569 / NCTC 13031 / TMC 1543 / L948)</name>
    <name type="common">Mycobacterium abscessus</name>
    <dbReference type="NCBI Taxonomy" id="561007"/>
    <lineage>
        <taxon>Bacteria</taxon>
        <taxon>Bacillati</taxon>
        <taxon>Actinomycetota</taxon>
        <taxon>Actinomycetes</taxon>
        <taxon>Mycobacteriales</taxon>
        <taxon>Mycobacteriaceae</taxon>
        <taxon>Mycobacteroides</taxon>
        <taxon>Mycobacteroides abscessus</taxon>
    </lineage>
</organism>
<keyword id="KW-0068">Autocatalytic cleavage</keyword>
<keyword id="KW-0227">DNA damage</keyword>
<keyword id="KW-0234">DNA repair</keyword>
<keyword id="KW-0235">DNA replication</keyword>
<keyword id="KW-0238">DNA-binding</keyword>
<keyword id="KW-0378">Hydrolase</keyword>
<keyword id="KW-1185">Reference proteome</keyword>
<keyword id="KW-0678">Repressor</keyword>
<keyword id="KW-0742">SOS response</keyword>
<keyword id="KW-0804">Transcription</keyword>
<keyword id="KW-0805">Transcription regulation</keyword>
<proteinExistence type="inferred from homology"/>
<feature type="chain" id="PRO_1000089580" description="LexA repressor">
    <location>
        <begin position="1"/>
        <end position="224"/>
    </location>
</feature>
<feature type="DNA-binding region" description="H-T-H motif" evidence="1">
    <location>
        <begin position="38"/>
        <end position="58"/>
    </location>
</feature>
<feature type="region of interest" description="Disordered" evidence="2">
    <location>
        <begin position="71"/>
        <end position="96"/>
    </location>
</feature>
<feature type="compositionally biased region" description="Basic and acidic residues" evidence="2">
    <location>
        <begin position="71"/>
        <end position="82"/>
    </location>
</feature>
<feature type="active site" description="For autocatalytic cleavage activity" evidence="1">
    <location>
        <position position="148"/>
    </location>
</feature>
<feature type="active site" description="For autocatalytic cleavage activity" evidence="1">
    <location>
        <position position="185"/>
    </location>
</feature>
<feature type="site" description="Cleavage; by autolysis" evidence="1">
    <location>
        <begin position="113"/>
        <end position="114"/>
    </location>
</feature>
<accession>B1MCZ5</accession>
<dbReference type="EC" id="3.4.21.88" evidence="1"/>
<dbReference type="EMBL" id="CU458896">
    <property type="protein sequence ID" value="CAM63116.1"/>
    <property type="molecule type" value="Genomic_DNA"/>
</dbReference>
<dbReference type="RefSeq" id="WP_005076527.1">
    <property type="nucleotide sequence ID" value="NZ_MLCG01000003.1"/>
</dbReference>
<dbReference type="SMR" id="B1MCZ5"/>
<dbReference type="MEROPS" id="S24.001"/>
<dbReference type="GeneID" id="93379971"/>
<dbReference type="KEGG" id="mab:MAB_3038"/>
<dbReference type="Proteomes" id="UP000007137">
    <property type="component" value="Chromosome"/>
</dbReference>
<dbReference type="GO" id="GO:0003677">
    <property type="term" value="F:DNA binding"/>
    <property type="evidence" value="ECO:0007669"/>
    <property type="project" value="UniProtKB-UniRule"/>
</dbReference>
<dbReference type="GO" id="GO:0004252">
    <property type="term" value="F:serine-type endopeptidase activity"/>
    <property type="evidence" value="ECO:0007669"/>
    <property type="project" value="UniProtKB-UniRule"/>
</dbReference>
<dbReference type="GO" id="GO:0006281">
    <property type="term" value="P:DNA repair"/>
    <property type="evidence" value="ECO:0007669"/>
    <property type="project" value="UniProtKB-UniRule"/>
</dbReference>
<dbReference type="GO" id="GO:0006260">
    <property type="term" value="P:DNA replication"/>
    <property type="evidence" value="ECO:0007669"/>
    <property type="project" value="UniProtKB-UniRule"/>
</dbReference>
<dbReference type="GO" id="GO:0045892">
    <property type="term" value="P:negative regulation of DNA-templated transcription"/>
    <property type="evidence" value="ECO:0007669"/>
    <property type="project" value="UniProtKB-UniRule"/>
</dbReference>
<dbReference type="GO" id="GO:0006508">
    <property type="term" value="P:proteolysis"/>
    <property type="evidence" value="ECO:0007669"/>
    <property type="project" value="InterPro"/>
</dbReference>
<dbReference type="GO" id="GO:0009432">
    <property type="term" value="P:SOS response"/>
    <property type="evidence" value="ECO:0007669"/>
    <property type="project" value="UniProtKB-UniRule"/>
</dbReference>
<dbReference type="CDD" id="cd06529">
    <property type="entry name" value="S24_LexA-like"/>
    <property type="match status" value="1"/>
</dbReference>
<dbReference type="FunFam" id="1.10.10.10:FF:000009">
    <property type="entry name" value="LexA repressor"/>
    <property type="match status" value="1"/>
</dbReference>
<dbReference type="FunFam" id="2.10.109.10:FF:000001">
    <property type="entry name" value="LexA repressor"/>
    <property type="match status" value="1"/>
</dbReference>
<dbReference type="Gene3D" id="2.10.109.10">
    <property type="entry name" value="Umud Fragment, subunit A"/>
    <property type="match status" value="1"/>
</dbReference>
<dbReference type="Gene3D" id="1.10.10.10">
    <property type="entry name" value="Winged helix-like DNA-binding domain superfamily/Winged helix DNA-binding domain"/>
    <property type="match status" value="1"/>
</dbReference>
<dbReference type="HAMAP" id="MF_00015">
    <property type="entry name" value="LexA"/>
    <property type="match status" value="1"/>
</dbReference>
<dbReference type="InterPro" id="IPR006200">
    <property type="entry name" value="LexA"/>
</dbReference>
<dbReference type="InterPro" id="IPR039418">
    <property type="entry name" value="LexA-like"/>
</dbReference>
<dbReference type="InterPro" id="IPR036286">
    <property type="entry name" value="LexA/Signal_pep-like_sf"/>
</dbReference>
<dbReference type="InterPro" id="IPR006199">
    <property type="entry name" value="LexA_DNA-bd_dom"/>
</dbReference>
<dbReference type="InterPro" id="IPR050077">
    <property type="entry name" value="LexA_repressor"/>
</dbReference>
<dbReference type="InterPro" id="IPR006197">
    <property type="entry name" value="Peptidase_S24_LexA"/>
</dbReference>
<dbReference type="InterPro" id="IPR015927">
    <property type="entry name" value="Peptidase_S24_S26A/B/C"/>
</dbReference>
<dbReference type="InterPro" id="IPR036388">
    <property type="entry name" value="WH-like_DNA-bd_sf"/>
</dbReference>
<dbReference type="InterPro" id="IPR036390">
    <property type="entry name" value="WH_DNA-bd_sf"/>
</dbReference>
<dbReference type="NCBIfam" id="TIGR00498">
    <property type="entry name" value="lexA"/>
    <property type="match status" value="1"/>
</dbReference>
<dbReference type="PANTHER" id="PTHR33516">
    <property type="entry name" value="LEXA REPRESSOR"/>
    <property type="match status" value="1"/>
</dbReference>
<dbReference type="PANTHER" id="PTHR33516:SF2">
    <property type="entry name" value="LEXA REPRESSOR-RELATED"/>
    <property type="match status" value="1"/>
</dbReference>
<dbReference type="Pfam" id="PF01726">
    <property type="entry name" value="LexA_DNA_bind"/>
    <property type="match status" value="1"/>
</dbReference>
<dbReference type="Pfam" id="PF00717">
    <property type="entry name" value="Peptidase_S24"/>
    <property type="match status" value="1"/>
</dbReference>
<dbReference type="PRINTS" id="PR00726">
    <property type="entry name" value="LEXASERPTASE"/>
</dbReference>
<dbReference type="SUPFAM" id="SSF51306">
    <property type="entry name" value="LexA/Signal peptidase"/>
    <property type="match status" value="1"/>
</dbReference>
<dbReference type="SUPFAM" id="SSF46785">
    <property type="entry name" value="Winged helix' DNA-binding domain"/>
    <property type="match status" value="1"/>
</dbReference>
<evidence type="ECO:0000255" key="1">
    <source>
        <dbReference type="HAMAP-Rule" id="MF_00015"/>
    </source>
</evidence>
<evidence type="ECO:0000256" key="2">
    <source>
        <dbReference type="SAM" id="MobiDB-lite"/>
    </source>
</evidence>
<gene>
    <name evidence="1" type="primary">lexA</name>
    <name type="ordered locus">MAB_3038</name>
</gene>
<protein>
    <recommendedName>
        <fullName evidence="1">LexA repressor</fullName>
        <ecNumber evidence="1">3.4.21.88</ecNumber>
    </recommendedName>
</protein>
<name>LEXA_MYCA9</name>
<reference key="1">
    <citation type="journal article" date="2009" name="PLoS ONE">
        <title>Non mycobacterial virulence genes in the genome of the emerging pathogen Mycobacterium abscessus.</title>
        <authorList>
            <person name="Ripoll F."/>
            <person name="Pasek S."/>
            <person name="Schenowitz C."/>
            <person name="Dossat C."/>
            <person name="Barbe V."/>
            <person name="Rottman M."/>
            <person name="Macheras E."/>
            <person name="Heym B."/>
            <person name="Herrmann J.L."/>
            <person name="Daffe M."/>
            <person name="Brosch R."/>
            <person name="Risler J.L."/>
            <person name="Gaillard J.L."/>
        </authorList>
    </citation>
    <scope>NUCLEOTIDE SEQUENCE [LARGE SCALE GENOMIC DNA]</scope>
    <source>
        <strain>ATCC 19977 / DSM 44196 / CCUG 20993 / CIP 104536 / JCM 13569 / NCTC 13031 / TMC 1543 / L948</strain>
    </source>
</reference>